<accession>C1CVP5</accession>
<name>ALR_DEIDV</name>
<dbReference type="EC" id="5.1.1.1" evidence="1"/>
<dbReference type="EMBL" id="CP001114">
    <property type="protein sequence ID" value="ACO46262.2"/>
    <property type="molecule type" value="Genomic_DNA"/>
</dbReference>
<dbReference type="SMR" id="C1CVP5"/>
<dbReference type="STRING" id="546414.Deide_13250"/>
<dbReference type="PaxDb" id="546414-Deide_13250"/>
<dbReference type="KEGG" id="ddr:Deide_13250"/>
<dbReference type="eggNOG" id="COG0787">
    <property type="taxonomic scope" value="Bacteria"/>
</dbReference>
<dbReference type="HOGENOM" id="CLU_028393_2_2_0"/>
<dbReference type="UniPathway" id="UPA00042">
    <property type="reaction ID" value="UER00497"/>
</dbReference>
<dbReference type="Proteomes" id="UP000002208">
    <property type="component" value="Chromosome"/>
</dbReference>
<dbReference type="GO" id="GO:0005829">
    <property type="term" value="C:cytosol"/>
    <property type="evidence" value="ECO:0007669"/>
    <property type="project" value="TreeGrafter"/>
</dbReference>
<dbReference type="GO" id="GO:0008784">
    <property type="term" value="F:alanine racemase activity"/>
    <property type="evidence" value="ECO:0007669"/>
    <property type="project" value="UniProtKB-UniRule"/>
</dbReference>
<dbReference type="GO" id="GO:0030170">
    <property type="term" value="F:pyridoxal phosphate binding"/>
    <property type="evidence" value="ECO:0007669"/>
    <property type="project" value="UniProtKB-UniRule"/>
</dbReference>
<dbReference type="GO" id="GO:0030632">
    <property type="term" value="P:D-alanine biosynthetic process"/>
    <property type="evidence" value="ECO:0007669"/>
    <property type="project" value="UniProtKB-UniRule"/>
</dbReference>
<dbReference type="CDD" id="cd00430">
    <property type="entry name" value="PLPDE_III_AR"/>
    <property type="match status" value="1"/>
</dbReference>
<dbReference type="Gene3D" id="3.20.20.10">
    <property type="entry name" value="Alanine racemase"/>
    <property type="match status" value="1"/>
</dbReference>
<dbReference type="Gene3D" id="2.40.37.10">
    <property type="entry name" value="Lyase, Ornithine Decarboxylase, Chain A, domain 1"/>
    <property type="match status" value="1"/>
</dbReference>
<dbReference type="HAMAP" id="MF_01201">
    <property type="entry name" value="Ala_racemase"/>
    <property type="match status" value="1"/>
</dbReference>
<dbReference type="InterPro" id="IPR000821">
    <property type="entry name" value="Ala_racemase"/>
</dbReference>
<dbReference type="InterPro" id="IPR009006">
    <property type="entry name" value="Ala_racemase/Decarboxylase_C"/>
</dbReference>
<dbReference type="InterPro" id="IPR011079">
    <property type="entry name" value="Ala_racemase_C"/>
</dbReference>
<dbReference type="InterPro" id="IPR001608">
    <property type="entry name" value="Ala_racemase_N"/>
</dbReference>
<dbReference type="InterPro" id="IPR020622">
    <property type="entry name" value="Ala_racemase_pyridoxalP-BS"/>
</dbReference>
<dbReference type="InterPro" id="IPR029066">
    <property type="entry name" value="PLP-binding_barrel"/>
</dbReference>
<dbReference type="NCBIfam" id="TIGR00492">
    <property type="entry name" value="alr"/>
    <property type="match status" value="1"/>
</dbReference>
<dbReference type="PANTHER" id="PTHR30511">
    <property type="entry name" value="ALANINE RACEMASE"/>
    <property type="match status" value="1"/>
</dbReference>
<dbReference type="PANTHER" id="PTHR30511:SF0">
    <property type="entry name" value="ALANINE RACEMASE, CATABOLIC-RELATED"/>
    <property type="match status" value="1"/>
</dbReference>
<dbReference type="Pfam" id="PF00842">
    <property type="entry name" value="Ala_racemase_C"/>
    <property type="match status" value="1"/>
</dbReference>
<dbReference type="Pfam" id="PF01168">
    <property type="entry name" value="Ala_racemase_N"/>
    <property type="match status" value="1"/>
</dbReference>
<dbReference type="PRINTS" id="PR00992">
    <property type="entry name" value="ALARACEMASE"/>
</dbReference>
<dbReference type="SMART" id="SM01005">
    <property type="entry name" value="Ala_racemase_C"/>
    <property type="match status" value="1"/>
</dbReference>
<dbReference type="SUPFAM" id="SSF50621">
    <property type="entry name" value="Alanine racemase C-terminal domain-like"/>
    <property type="match status" value="1"/>
</dbReference>
<dbReference type="SUPFAM" id="SSF51419">
    <property type="entry name" value="PLP-binding barrel"/>
    <property type="match status" value="1"/>
</dbReference>
<dbReference type="PROSITE" id="PS00395">
    <property type="entry name" value="ALANINE_RACEMASE"/>
    <property type="match status" value="1"/>
</dbReference>
<protein>
    <recommendedName>
        <fullName evidence="1">Alanine racemase</fullName>
        <ecNumber evidence="1">5.1.1.1</ecNumber>
    </recommendedName>
</protein>
<evidence type="ECO:0000255" key="1">
    <source>
        <dbReference type="HAMAP-Rule" id="MF_01201"/>
    </source>
</evidence>
<proteinExistence type="inferred from homology"/>
<feature type="chain" id="PRO_1000213831" description="Alanine racemase">
    <location>
        <begin position="1"/>
        <end position="352"/>
    </location>
</feature>
<feature type="active site" description="Proton acceptor; specific for D-alanine" evidence="1">
    <location>
        <position position="34"/>
    </location>
</feature>
<feature type="active site" description="Proton acceptor; specific for L-alanine" evidence="1">
    <location>
        <position position="248"/>
    </location>
</feature>
<feature type="binding site" evidence="1">
    <location>
        <position position="126"/>
    </location>
    <ligand>
        <name>substrate</name>
    </ligand>
</feature>
<feature type="binding site" evidence="1">
    <location>
        <position position="296"/>
    </location>
    <ligand>
        <name>substrate</name>
    </ligand>
</feature>
<feature type="modified residue" description="N6-(pyridoxal phosphate)lysine" evidence="1">
    <location>
        <position position="34"/>
    </location>
</feature>
<reference key="1">
    <citation type="journal article" date="2009" name="PLoS Genet.">
        <title>Alliance of proteomics and genomics to unravel the specificities of Sahara bacterium Deinococcus deserti.</title>
        <authorList>
            <person name="de Groot A."/>
            <person name="Dulermo R."/>
            <person name="Ortet P."/>
            <person name="Blanchard L."/>
            <person name="Guerin P."/>
            <person name="Fernandez B."/>
            <person name="Vacherie B."/>
            <person name="Dossat C."/>
            <person name="Jolivet E."/>
            <person name="Siguier P."/>
            <person name="Chandler M."/>
            <person name="Barakat M."/>
            <person name="Dedieu A."/>
            <person name="Barbe V."/>
            <person name="Heulin T."/>
            <person name="Sommer S."/>
            <person name="Achouak W."/>
            <person name="Armengaud J."/>
        </authorList>
    </citation>
    <scope>NUCLEOTIDE SEQUENCE [LARGE SCALE GENOMIC DNA]</scope>
    <source>
        <strain>DSM 17065 / CIP 109153 / LMG 22923 / VCD115</strain>
    </source>
</reference>
<organism>
    <name type="scientific">Deinococcus deserti (strain DSM 17065 / CIP 109153 / LMG 22923 / VCD115)</name>
    <dbReference type="NCBI Taxonomy" id="546414"/>
    <lineage>
        <taxon>Bacteria</taxon>
        <taxon>Thermotogati</taxon>
        <taxon>Deinococcota</taxon>
        <taxon>Deinococci</taxon>
        <taxon>Deinococcales</taxon>
        <taxon>Deinococcaceae</taxon>
        <taxon>Deinococcus</taxon>
    </lineage>
</organism>
<comment type="function">
    <text evidence="1">Catalyzes the interconversion of L-alanine and D-alanine. May also act on other amino acids.</text>
</comment>
<comment type="catalytic activity">
    <reaction evidence="1">
        <text>L-alanine = D-alanine</text>
        <dbReference type="Rhea" id="RHEA:20249"/>
        <dbReference type="ChEBI" id="CHEBI:57416"/>
        <dbReference type="ChEBI" id="CHEBI:57972"/>
        <dbReference type="EC" id="5.1.1.1"/>
    </reaction>
</comment>
<comment type="cofactor">
    <cofactor evidence="1">
        <name>pyridoxal 5'-phosphate</name>
        <dbReference type="ChEBI" id="CHEBI:597326"/>
    </cofactor>
</comment>
<comment type="pathway">
    <text evidence="1">Amino-acid biosynthesis; D-alanine biosynthesis; D-alanine from L-alanine: step 1/1.</text>
</comment>
<comment type="similarity">
    <text evidence="1">Belongs to the alanine racemase family.</text>
</comment>
<keyword id="KW-0413">Isomerase</keyword>
<keyword id="KW-0663">Pyridoxal phosphate</keyword>
<keyword id="KW-1185">Reference proteome</keyword>
<gene>
    <name type="primary">alr</name>
    <name type="ordered locus">Deide_13250</name>
</gene>
<sequence length="352" mass="37539">MQSRAYALISEAALHHNLSGLSARAGTRLLLPVKANAYGHGLELIARQAAAHPDVWGLAVATPREAQAVALLNLGRPVVLLTPPTPDEVVPLADLGVRLPVSSLEEAEALPVHARAHLKVDTGMNRLGARPDEAIRIGQRLAERGVLEGAYTHFATTDEEDLSFAHEQLRRFRSVIAALPPVLAHCANGGGILSLGHLGDMGLSRPGLASYGFAPAHLQRVVPLTPVMTLRATVTQVHKAFAGESVSYGGLWQAPRDTTLATIGFGYADGYPRNATLRAHVLVRGERRPVVGRICMDQCMVDVTGLEVRAGDQVECWGSGDLTVSEVAGWGDTIEYEVLTGLGERVERVAVP</sequence>